<keyword id="KW-0028">Amino-acid biosynthesis</keyword>
<keyword id="KW-0061">Asparagine biosynthesis</keyword>
<keyword id="KW-0067">ATP-binding</keyword>
<keyword id="KW-0963">Cytoplasm</keyword>
<keyword id="KW-0436">Ligase</keyword>
<keyword id="KW-0547">Nucleotide-binding</keyword>
<keyword id="KW-1185">Reference proteome</keyword>
<reference key="1">
    <citation type="journal article" date="2003" name="Microbiology">
        <title>The complete genome sequence of the avian pathogen Mycoplasma gallisepticum strain R(low).</title>
        <authorList>
            <person name="Papazisi L."/>
            <person name="Gorton T.S."/>
            <person name="Kutish G."/>
            <person name="Markham P.F."/>
            <person name="Browning G.F."/>
            <person name="Nguyen D.K."/>
            <person name="Swartzell S."/>
            <person name="Madan A."/>
            <person name="Mahairas G."/>
            <person name="Geary S.J."/>
        </authorList>
    </citation>
    <scope>NUCLEOTIDE SEQUENCE [LARGE SCALE GENOMIC DNA]</scope>
    <source>
        <strain>R(low / passage 15 / clone 2)</strain>
    </source>
</reference>
<protein>
    <recommendedName>
        <fullName evidence="1">Aspartate--ammonia ligase</fullName>
        <ecNumber evidence="1">6.3.1.1</ecNumber>
    </recommendedName>
    <alternativeName>
        <fullName evidence="1">Asparagine synthetase A</fullName>
    </alternativeName>
</protein>
<feature type="chain" id="PRO_0000195882" description="Aspartate--ammonia ligase">
    <location>
        <begin position="1"/>
        <end position="327"/>
    </location>
</feature>
<name>ASNA_MYCGA</name>
<accession>Q7NAM0</accession>
<comment type="catalytic activity">
    <reaction evidence="1">
        <text>L-aspartate + NH4(+) + ATP = L-asparagine + AMP + diphosphate + H(+)</text>
        <dbReference type="Rhea" id="RHEA:11372"/>
        <dbReference type="ChEBI" id="CHEBI:15378"/>
        <dbReference type="ChEBI" id="CHEBI:28938"/>
        <dbReference type="ChEBI" id="CHEBI:29991"/>
        <dbReference type="ChEBI" id="CHEBI:30616"/>
        <dbReference type="ChEBI" id="CHEBI:33019"/>
        <dbReference type="ChEBI" id="CHEBI:58048"/>
        <dbReference type="ChEBI" id="CHEBI:456215"/>
        <dbReference type="EC" id="6.3.1.1"/>
    </reaction>
</comment>
<comment type="pathway">
    <text evidence="1">Amino-acid biosynthesis; L-asparagine biosynthesis; L-asparagine from L-aspartate (ammonia route): step 1/1.</text>
</comment>
<comment type="subcellular location">
    <subcellularLocation>
        <location evidence="1">Cytoplasm</location>
    </subcellularLocation>
</comment>
<comment type="similarity">
    <text evidence="1">Belongs to the class-II aminoacyl-tRNA synthetase family. AsnA subfamily.</text>
</comment>
<sequence>MKKLTLLETELAIKYIKDLFQNALSKELNLLRVSAPLIIAPDSGLNDNLNGWEAPVSFKSKTNGVSSQVVQSLAKWKRYSIARYEIPLYQGLYTDMNAIRMDETLDATHSMYVDQWDWELRISENDRNVEFLKNTVNKIYKVLKEAQLKVNEKYGIFEQKDLLPEHIHFVTTQELLDQYPDKNPSEREQLVCEKYKAVFVMQVGKKLSNNQVHDGRSPDYDDWSLNGDIMVYNPRSKKALELSSMGIRVNKEVLLKQLEESKQNERLELMFHKKLVNGELHQTIGGGIGQSRLCYFLLQKDHIGEVQASHWSDEIVVEAKAKGIKLL</sequence>
<proteinExistence type="inferred from homology"/>
<organism>
    <name type="scientific">Mycoplasmoides gallisepticum (strain R(low / passage 15 / clone 2))</name>
    <name type="common">Mycoplasma gallisepticum</name>
    <dbReference type="NCBI Taxonomy" id="710127"/>
    <lineage>
        <taxon>Bacteria</taxon>
        <taxon>Bacillati</taxon>
        <taxon>Mycoplasmatota</taxon>
        <taxon>Mycoplasmoidales</taxon>
        <taxon>Mycoplasmoidaceae</taxon>
        <taxon>Mycoplasmoides</taxon>
    </lineage>
</organism>
<gene>
    <name evidence="1" type="primary">asnA</name>
    <name type="ordered locus">MYCGA6160</name>
    <name type="ORF">MGA_0424</name>
</gene>
<dbReference type="EC" id="6.3.1.1" evidence="1"/>
<dbReference type="EMBL" id="AE015450">
    <property type="protein sequence ID" value="AAP56966.2"/>
    <property type="molecule type" value="Genomic_DNA"/>
</dbReference>
<dbReference type="RefSeq" id="WP_011113875.1">
    <property type="nucleotide sequence ID" value="NC_004829.2"/>
</dbReference>
<dbReference type="SMR" id="Q7NAM0"/>
<dbReference type="GeneID" id="93510452"/>
<dbReference type="KEGG" id="mga:MGA_0424"/>
<dbReference type="PATRIC" id="fig|233150.7.peg.693"/>
<dbReference type="HOGENOM" id="CLU_071543_0_0_14"/>
<dbReference type="OrthoDB" id="9766088at2"/>
<dbReference type="UniPathway" id="UPA00134">
    <property type="reaction ID" value="UER00194"/>
</dbReference>
<dbReference type="Proteomes" id="UP000001418">
    <property type="component" value="Chromosome"/>
</dbReference>
<dbReference type="GO" id="GO:0005829">
    <property type="term" value="C:cytosol"/>
    <property type="evidence" value="ECO:0007669"/>
    <property type="project" value="TreeGrafter"/>
</dbReference>
<dbReference type="GO" id="GO:0004071">
    <property type="term" value="F:aspartate-ammonia ligase activity"/>
    <property type="evidence" value="ECO:0007669"/>
    <property type="project" value="UniProtKB-UniRule"/>
</dbReference>
<dbReference type="GO" id="GO:0005524">
    <property type="term" value="F:ATP binding"/>
    <property type="evidence" value="ECO:0007669"/>
    <property type="project" value="UniProtKB-UniRule"/>
</dbReference>
<dbReference type="GO" id="GO:0070981">
    <property type="term" value="P:L-asparagine biosynthetic process"/>
    <property type="evidence" value="ECO:0007669"/>
    <property type="project" value="UniProtKB-UniRule"/>
</dbReference>
<dbReference type="CDD" id="cd00645">
    <property type="entry name" value="AsnA"/>
    <property type="match status" value="1"/>
</dbReference>
<dbReference type="Gene3D" id="3.30.930.10">
    <property type="entry name" value="Bira Bifunctional Protein, Domain 2"/>
    <property type="match status" value="1"/>
</dbReference>
<dbReference type="HAMAP" id="MF_00555">
    <property type="entry name" value="AsnA"/>
    <property type="match status" value="1"/>
</dbReference>
<dbReference type="InterPro" id="IPR006195">
    <property type="entry name" value="aa-tRNA-synth_II"/>
</dbReference>
<dbReference type="InterPro" id="IPR045864">
    <property type="entry name" value="aa-tRNA-synth_II/BPL/LPL"/>
</dbReference>
<dbReference type="InterPro" id="IPR004618">
    <property type="entry name" value="AsnA"/>
</dbReference>
<dbReference type="NCBIfam" id="TIGR00669">
    <property type="entry name" value="asnA"/>
    <property type="match status" value="1"/>
</dbReference>
<dbReference type="PANTHER" id="PTHR30073">
    <property type="entry name" value="ASPARTATE--AMMONIA LIGASE"/>
    <property type="match status" value="1"/>
</dbReference>
<dbReference type="PANTHER" id="PTHR30073:SF5">
    <property type="entry name" value="ASPARTATE--AMMONIA LIGASE"/>
    <property type="match status" value="1"/>
</dbReference>
<dbReference type="Pfam" id="PF03590">
    <property type="entry name" value="AsnA"/>
    <property type="match status" value="1"/>
</dbReference>
<dbReference type="PIRSF" id="PIRSF001555">
    <property type="entry name" value="Asp_ammon_ligase"/>
    <property type="match status" value="1"/>
</dbReference>
<dbReference type="SUPFAM" id="SSF55681">
    <property type="entry name" value="Class II aaRS and biotin synthetases"/>
    <property type="match status" value="1"/>
</dbReference>
<dbReference type="PROSITE" id="PS50862">
    <property type="entry name" value="AA_TRNA_LIGASE_II"/>
    <property type="match status" value="1"/>
</dbReference>
<evidence type="ECO:0000255" key="1">
    <source>
        <dbReference type="HAMAP-Rule" id="MF_00555"/>
    </source>
</evidence>